<organism>
    <name type="scientific">Enterobacter sp. (strain 638)</name>
    <dbReference type="NCBI Taxonomy" id="399742"/>
    <lineage>
        <taxon>Bacteria</taxon>
        <taxon>Pseudomonadati</taxon>
        <taxon>Pseudomonadota</taxon>
        <taxon>Gammaproteobacteria</taxon>
        <taxon>Enterobacterales</taxon>
        <taxon>Enterobacteriaceae</taxon>
        <taxon>Enterobacter</taxon>
    </lineage>
</organism>
<name>ABDH_ENT38</name>
<keyword id="KW-0520">NAD</keyword>
<keyword id="KW-0560">Oxidoreductase</keyword>
<dbReference type="EC" id="1.2.1.19" evidence="1"/>
<dbReference type="EC" id="1.2.1.-" evidence="1"/>
<dbReference type="EMBL" id="CP000653">
    <property type="protein sequence ID" value="ABP60799.1"/>
    <property type="molecule type" value="Genomic_DNA"/>
</dbReference>
<dbReference type="RefSeq" id="WP_012017514.1">
    <property type="nucleotide sequence ID" value="NC_009436.1"/>
</dbReference>
<dbReference type="SMR" id="A4WAR9"/>
<dbReference type="STRING" id="399742.Ent638_2124"/>
<dbReference type="KEGG" id="ent:Ent638_2124"/>
<dbReference type="eggNOG" id="COG1012">
    <property type="taxonomic scope" value="Bacteria"/>
</dbReference>
<dbReference type="HOGENOM" id="CLU_005391_0_0_6"/>
<dbReference type="OrthoDB" id="9812625at2"/>
<dbReference type="UniPathway" id="UPA00188">
    <property type="reaction ID" value="UER00292"/>
</dbReference>
<dbReference type="Proteomes" id="UP000000230">
    <property type="component" value="Chromosome"/>
</dbReference>
<dbReference type="GO" id="GO:0019145">
    <property type="term" value="F:aminobutyraldehyde dehydrogenase (NAD+) activity"/>
    <property type="evidence" value="ECO:0007669"/>
    <property type="project" value="UniProtKB-UniRule"/>
</dbReference>
<dbReference type="GO" id="GO:0051287">
    <property type="term" value="F:NAD binding"/>
    <property type="evidence" value="ECO:0007669"/>
    <property type="project" value="UniProtKB-UniRule"/>
</dbReference>
<dbReference type="GO" id="GO:0019477">
    <property type="term" value="P:L-lysine catabolic process"/>
    <property type="evidence" value="ECO:0007669"/>
    <property type="project" value="UniProtKB-UniRule"/>
</dbReference>
<dbReference type="GO" id="GO:0009447">
    <property type="term" value="P:putrescine catabolic process"/>
    <property type="evidence" value="ECO:0007669"/>
    <property type="project" value="UniProtKB-UniRule"/>
</dbReference>
<dbReference type="CDD" id="cd07092">
    <property type="entry name" value="ALDH_ABALDH-YdcW"/>
    <property type="match status" value="1"/>
</dbReference>
<dbReference type="FunFam" id="3.40.605.10:FF:000001">
    <property type="entry name" value="Aldehyde dehydrogenase 1"/>
    <property type="match status" value="1"/>
</dbReference>
<dbReference type="FunFam" id="3.40.309.10:FF:000010">
    <property type="entry name" value="Gamma-aminobutyraldehyde dehydrogenase"/>
    <property type="match status" value="1"/>
</dbReference>
<dbReference type="Gene3D" id="3.40.605.10">
    <property type="entry name" value="Aldehyde Dehydrogenase, Chain A, domain 1"/>
    <property type="match status" value="1"/>
</dbReference>
<dbReference type="Gene3D" id="3.40.309.10">
    <property type="entry name" value="Aldehyde Dehydrogenase, Chain A, domain 2"/>
    <property type="match status" value="1"/>
</dbReference>
<dbReference type="HAMAP" id="MF_01275">
    <property type="entry name" value="Aldedh_Prr"/>
    <property type="match status" value="1"/>
</dbReference>
<dbReference type="InterPro" id="IPR016161">
    <property type="entry name" value="Ald_DH/histidinol_DH"/>
</dbReference>
<dbReference type="InterPro" id="IPR016163">
    <property type="entry name" value="Ald_DH_C"/>
</dbReference>
<dbReference type="InterPro" id="IPR029510">
    <property type="entry name" value="Ald_DH_CS_GLU"/>
</dbReference>
<dbReference type="InterPro" id="IPR016162">
    <property type="entry name" value="Ald_DH_N"/>
</dbReference>
<dbReference type="InterPro" id="IPR015590">
    <property type="entry name" value="Aldehyde_DH_dom"/>
</dbReference>
<dbReference type="InterPro" id="IPR015657">
    <property type="entry name" value="Aminobutyraldehyde_DH"/>
</dbReference>
<dbReference type="InterPro" id="IPR017749">
    <property type="entry name" value="PatD"/>
</dbReference>
<dbReference type="NCBIfam" id="TIGR03374">
    <property type="entry name" value="ABALDH"/>
    <property type="match status" value="1"/>
</dbReference>
<dbReference type="NCBIfam" id="NF010000">
    <property type="entry name" value="PRK13473.1"/>
    <property type="match status" value="1"/>
</dbReference>
<dbReference type="PANTHER" id="PTHR11699">
    <property type="entry name" value="ALDEHYDE DEHYDROGENASE-RELATED"/>
    <property type="match status" value="1"/>
</dbReference>
<dbReference type="Pfam" id="PF00171">
    <property type="entry name" value="Aldedh"/>
    <property type="match status" value="1"/>
</dbReference>
<dbReference type="SUPFAM" id="SSF53720">
    <property type="entry name" value="ALDH-like"/>
    <property type="match status" value="1"/>
</dbReference>
<dbReference type="PROSITE" id="PS00687">
    <property type="entry name" value="ALDEHYDE_DEHYDR_GLU"/>
    <property type="match status" value="1"/>
</dbReference>
<reference key="1">
    <citation type="journal article" date="2010" name="PLoS Genet.">
        <title>Genome sequence of the plant growth promoting endophytic bacterium Enterobacter sp. 638.</title>
        <authorList>
            <person name="Taghavi S."/>
            <person name="van der Lelie D."/>
            <person name="Hoffman A."/>
            <person name="Zhang Y.B."/>
            <person name="Walla M.D."/>
            <person name="Vangronsveld J."/>
            <person name="Newman L."/>
            <person name="Monchy S."/>
        </authorList>
    </citation>
    <scope>NUCLEOTIDE SEQUENCE [LARGE SCALE GENOMIC DNA]</scope>
    <source>
        <strain>638</strain>
    </source>
</reference>
<sequence>MQNQLLINGELVNGEGEKQPVYNPATGEVLLEIAEASAAQVDAAVRAADRAFSEWGHTTPKARAECLLKLADVIEEHAETFARLESQNCGKPLHCVISDEIPAVVDVFRFFAGAARCLNGLAAGEYLEGHTSMIRRDPVGVVASIAPWNYPLMMAAWKLAPALAAGNCVVIKPSEITPLTALKLAELAKDIFPAGVLNVLFGRGKTVGDPLTGHEKVRMVSLTGSIATGEHIISHTASSIKRTHMELGGKAPVIVFDDADIDAVVEGVRTFGFYNAGQDCTAACRIYAQKGIYPQLVEKLGAAVATLKTGAPEDESTELGPLSSAAHLERVCKAVDEAKALGHVNVVTGGKKVEGGGYFFEPTLLAGAKQEDAIVQREVFGPVVSMTEFDDEEQVLAWANDSQYGLASSVWTQDVGRAHRMSARLQYGCTWVNTHFMLVSEMPHGGMKLSGYGKDMSVYGLEDYTVIRHVMIKH</sequence>
<accession>A4WAR9</accession>
<proteinExistence type="inferred from homology"/>
<evidence type="ECO:0000255" key="1">
    <source>
        <dbReference type="HAMAP-Rule" id="MF_01275"/>
    </source>
</evidence>
<protein>
    <recommendedName>
        <fullName evidence="1">Gamma-aminobutyraldehyde dehydrogenase</fullName>
        <shortName evidence="1">ABALDH</shortName>
        <ecNumber evidence="1">1.2.1.19</ecNumber>
    </recommendedName>
    <alternativeName>
        <fullName evidence="1">1-pyrroline dehydrogenase</fullName>
    </alternativeName>
    <alternativeName>
        <fullName evidence="1">4-aminobutanal dehydrogenase</fullName>
    </alternativeName>
    <alternativeName>
        <fullName evidence="1">5-aminopentanal dehydrogenase</fullName>
        <ecNumber evidence="1">1.2.1.-</ecNumber>
    </alternativeName>
</protein>
<gene>
    <name evidence="1" type="primary">patD</name>
    <name type="ordered locus">Ent638_2124</name>
</gene>
<comment type="function">
    <text evidence="1">Catalyzes the oxidation 4-aminobutanal (gamma-aminobutyraldehyde) to 4-aminobutanoate (gamma-aminobutyrate or GABA). This is the second step in one of two pathways for putrescine degradation, where putrescine is converted into 4-aminobutanoate via 4-aminobutanal. Also functions as a 5-aminopentanal dehydrogenase in a a L-lysine degradation pathway to succinate that proceeds via cadaverine, glutarate and L-2-hydroxyglutarate.</text>
</comment>
<comment type="catalytic activity">
    <reaction evidence="1">
        <text>4-aminobutanal + NAD(+) + H2O = 4-aminobutanoate + NADH + 2 H(+)</text>
        <dbReference type="Rhea" id="RHEA:19105"/>
        <dbReference type="ChEBI" id="CHEBI:15377"/>
        <dbReference type="ChEBI" id="CHEBI:15378"/>
        <dbReference type="ChEBI" id="CHEBI:57540"/>
        <dbReference type="ChEBI" id="CHEBI:57945"/>
        <dbReference type="ChEBI" id="CHEBI:58264"/>
        <dbReference type="ChEBI" id="CHEBI:59888"/>
        <dbReference type="EC" id="1.2.1.19"/>
    </reaction>
    <physiologicalReaction direction="left-to-right" evidence="1">
        <dbReference type="Rhea" id="RHEA:19106"/>
    </physiologicalReaction>
</comment>
<comment type="catalytic activity">
    <reaction evidence="1">
        <text>5-aminopentanal + NAD(+) + H2O = 5-aminopentanoate + NADH + 2 H(+)</text>
        <dbReference type="Rhea" id="RHEA:61632"/>
        <dbReference type="ChEBI" id="CHEBI:15377"/>
        <dbReference type="ChEBI" id="CHEBI:15378"/>
        <dbReference type="ChEBI" id="CHEBI:57540"/>
        <dbReference type="ChEBI" id="CHEBI:57945"/>
        <dbReference type="ChEBI" id="CHEBI:144896"/>
        <dbReference type="ChEBI" id="CHEBI:356010"/>
    </reaction>
    <physiologicalReaction direction="left-to-right" evidence="1">
        <dbReference type="Rhea" id="RHEA:61633"/>
    </physiologicalReaction>
</comment>
<comment type="pathway">
    <text evidence="1">Amine and polyamine degradation; putrescine degradation; 4-aminobutanoate from 4-aminobutanal: step 1/1.</text>
</comment>
<comment type="pathway">
    <text evidence="1">Amino-acid degradation.</text>
</comment>
<comment type="subunit">
    <text evidence="1">Homotetramer.</text>
</comment>
<comment type="miscellaneous">
    <text evidence="1">4-aminobutanal can spontaneously cyclize to 1-pyrroline, and 5-aminopentanal to 1-piperideine.</text>
</comment>
<comment type="similarity">
    <text evidence="1">Belongs to the aldehyde dehydrogenase family. Gamma-aminobutyraldehyde dehydrogenase subfamily.</text>
</comment>
<feature type="chain" id="PRO_1000067394" description="Gamma-aminobutyraldehyde dehydrogenase">
    <location>
        <begin position="1"/>
        <end position="474"/>
    </location>
</feature>
<feature type="active site" evidence="1">
    <location>
        <position position="246"/>
    </location>
</feature>
<feature type="active site" description="Nucleophile" evidence="1">
    <location>
        <position position="280"/>
    </location>
</feature>
<feature type="binding site" evidence="1">
    <location>
        <begin position="146"/>
        <end position="148"/>
    </location>
    <ligand>
        <name>NAD(+)</name>
        <dbReference type="ChEBI" id="CHEBI:57540"/>
    </ligand>
</feature>
<feature type="binding site" evidence="1">
    <location>
        <begin position="172"/>
        <end position="175"/>
    </location>
    <ligand>
        <name>NAD(+)</name>
        <dbReference type="ChEBI" id="CHEBI:57540"/>
    </ligand>
</feature>
<feature type="binding site" evidence="1">
    <location>
        <position position="209"/>
    </location>
    <ligand>
        <name>NAD(+)</name>
        <dbReference type="ChEBI" id="CHEBI:57540"/>
    </ligand>
</feature>
<feature type="binding site" evidence="1">
    <location>
        <begin position="225"/>
        <end position="228"/>
    </location>
    <ligand>
        <name>NAD(+)</name>
        <dbReference type="ChEBI" id="CHEBI:57540"/>
    </ligand>
</feature>
<feature type="binding site" evidence="1">
    <location>
        <position position="280"/>
    </location>
    <ligand>
        <name>NAD(+)</name>
        <dbReference type="ChEBI" id="CHEBI:57540"/>
    </ligand>
</feature>